<proteinExistence type="inferred from homology"/>
<name>MURG_LEPBJ</name>
<dbReference type="EC" id="2.4.1.227" evidence="1"/>
<dbReference type="EMBL" id="CP000350">
    <property type="protein sequence ID" value="ABJ75176.1"/>
    <property type="molecule type" value="Genomic_DNA"/>
</dbReference>
<dbReference type="RefSeq" id="WP_011670913.1">
    <property type="nucleotide sequence ID" value="NC_008510.1"/>
</dbReference>
<dbReference type="SMR" id="Q04V94"/>
<dbReference type="CAZy" id="GT28">
    <property type="family name" value="Glycosyltransferase Family 28"/>
</dbReference>
<dbReference type="KEGG" id="lbj:LBJ_0476"/>
<dbReference type="HOGENOM" id="CLU_037404_2_1_12"/>
<dbReference type="UniPathway" id="UPA00219"/>
<dbReference type="Proteomes" id="UP000000656">
    <property type="component" value="Chromosome 1"/>
</dbReference>
<dbReference type="GO" id="GO:0005886">
    <property type="term" value="C:plasma membrane"/>
    <property type="evidence" value="ECO:0007669"/>
    <property type="project" value="UniProtKB-SubCell"/>
</dbReference>
<dbReference type="GO" id="GO:0051991">
    <property type="term" value="F:UDP-N-acetyl-D-glucosamine:N-acetylmuramoyl-L-alanyl-D-glutamyl-meso-2,6-diaminopimelyl-D-alanyl-D-alanine-diphosphoundecaprenol 4-beta-N-acetylglucosaminlytransferase activity"/>
    <property type="evidence" value="ECO:0007669"/>
    <property type="project" value="RHEA"/>
</dbReference>
<dbReference type="GO" id="GO:0050511">
    <property type="term" value="F:undecaprenyldiphospho-muramoylpentapeptide beta-N-acetylglucosaminyltransferase activity"/>
    <property type="evidence" value="ECO:0007669"/>
    <property type="project" value="UniProtKB-UniRule"/>
</dbReference>
<dbReference type="GO" id="GO:0005975">
    <property type="term" value="P:carbohydrate metabolic process"/>
    <property type="evidence" value="ECO:0007669"/>
    <property type="project" value="InterPro"/>
</dbReference>
<dbReference type="GO" id="GO:0051301">
    <property type="term" value="P:cell division"/>
    <property type="evidence" value="ECO:0007669"/>
    <property type="project" value="UniProtKB-KW"/>
</dbReference>
<dbReference type="GO" id="GO:0071555">
    <property type="term" value="P:cell wall organization"/>
    <property type="evidence" value="ECO:0007669"/>
    <property type="project" value="UniProtKB-KW"/>
</dbReference>
<dbReference type="GO" id="GO:0030259">
    <property type="term" value="P:lipid glycosylation"/>
    <property type="evidence" value="ECO:0007669"/>
    <property type="project" value="UniProtKB-UniRule"/>
</dbReference>
<dbReference type="GO" id="GO:0009252">
    <property type="term" value="P:peptidoglycan biosynthetic process"/>
    <property type="evidence" value="ECO:0007669"/>
    <property type="project" value="UniProtKB-UniRule"/>
</dbReference>
<dbReference type="GO" id="GO:0008360">
    <property type="term" value="P:regulation of cell shape"/>
    <property type="evidence" value="ECO:0007669"/>
    <property type="project" value="UniProtKB-KW"/>
</dbReference>
<dbReference type="CDD" id="cd03785">
    <property type="entry name" value="GT28_MurG"/>
    <property type="match status" value="1"/>
</dbReference>
<dbReference type="Gene3D" id="3.40.50.2000">
    <property type="entry name" value="Glycogen Phosphorylase B"/>
    <property type="match status" value="2"/>
</dbReference>
<dbReference type="HAMAP" id="MF_00033">
    <property type="entry name" value="MurG"/>
    <property type="match status" value="1"/>
</dbReference>
<dbReference type="InterPro" id="IPR006009">
    <property type="entry name" value="GlcNAc_MurG"/>
</dbReference>
<dbReference type="InterPro" id="IPR007235">
    <property type="entry name" value="Glyco_trans_28_C"/>
</dbReference>
<dbReference type="InterPro" id="IPR004276">
    <property type="entry name" value="GlycoTrans_28_N"/>
</dbReference>
<dbReference type="PANTHER" id="PTHR21015:SF22">
    <property type="entry name" value="GLYCOSYLTRANSFERASE"/>
    <property type="match status" value="1"/>
</dbReference>
<dbReference type="PANTHER" id="PTHR21015">
    <property type="entry name" value="UDP-N-ACETYLGLUCOSAMINE--N-ACETYLMURAMYL-(PENTAPEPTIDE) PYROPHOSPHORYL-UNDECAPRENOL N-ACETYLGLUCOSAMINE TRANSFERASE 1"/>
    <property type="match status" value="1"/>
</dbReference>
<dbReference type="Pfam" id="PF04101">
    <property type="entry name" value="Glyco_tran_28_C"/>
    <property type="match status" value="1"/>
</dbReference>
<dbReference type="Pfam" id="PF03033">
    <property type="entry name" value="Glyco_transf_28"/>
    <property type="match status" value="1"/>
</dbReference>
<dbReference type="SUPFAM" id="SSF53756">
    <property type="entry name" value="UDP-Glycosyltransferase/glycogen phosphorylase"/>
    <property type="match status" value="1"/>
</dbReference>
<accession>Q04V94</accession>
<keyword id="KW-0131">Cell cycle</keyword>
<keyword id="KW-0132">Cell division</keyword>
<keyword id="KW-0997">Cell inner membrane</keyword>
<keyword id="KW-1003">Cell membrane</keyword>
<keyword id="KW-0133">Cell shape</keyword>
<keyword id="KW-0961">Cell wall biogenesis/degradation</keyword>
<keyword id="KW-0328">Glycosyltransferase</keyword>
<keyword id="KW-0472">Membrane</keyword>
<keyword id="KW-0573">Peptidoglycan synthesis</keyword>
<keyword id="KW-0808">Transferase</keyword>
<sequence length="358" mass="40207">MRSIVIAAGGTGGHISPGVALAEVLTDLKEKIGYENLYLYSLIRNQNNPDLEQAPCPVLWHNLPPLSSNIFLFPFRYTIQILKTFLLFKKLNVDVVIGMGGYSTVSSILYGILFKKKIYLCEQNTVPGNVSRLFFRFANKAAFSFPPKNSAIPCDYQVLGNPLRKKTLPKMSLKFSEKYDTKKKTQFNVLVMGGSQGARQINNIVIALMGHEEINIQFRFRVLTGSALYEEVSKKTKKDAELISYSDNMKEHYEWANFVIARAGSGVLSECAAFALPMILIPYPYAKDDHQMANARYLELNGAAIVIDQKDEDESHLFKVLDQIANNVNLLNDMSISSLQCSHVDASKDTVKYFFSLD</sequence>
<evidence type="ECO:0000255" key="1">
    <source>
        <dbReference type="HAMAP-Rule" id="MF_00033"/>
    </source>
</evidence>
<protein>
    <recommendedName>
        <fullName evidence="1">UDP-N-acetylglucosamine--N-acetylmuramyl-(pentapeptide) pyrophosphoryl-undecaprenol N-acetylglucosamine transferase</fullName>
        <ecNumber evidence="1">2.4.1.227</ecNumber>
    </recommendedName>
    <alternativeName>
        <fullName evidence="1">Undecaprenyl-PP-MurNAc-pentapeptide-UDPGlcNAc GlcNAc transferase</fullName>
    </alternativeName>
</protein>
<feature type="chain" id="PRO_0000315108" description="UDP-N-acetylglucosamine--N-acetylmuramyl-(pentapeptide) pyrophosphoryl-undecaprenol N-acetylglucosamine transferase">
    <location>
        <begin position="1"/>
        <end position="358"/>
    </location>
</feature>
<feature type="binding site" evidence="1">
    <location>
        <begin position="11"/>
        <end position="13"/>
    </location>
    <ligand>
        <name>UDP-N-acetyl-alpha-D-glucosamine</name>
        <dbReference type="ChEBI" id="CHEBI:57705"/>
    </ligand>
</feature>
<feature type="binding site" evidence="1">
    <location>
        <position position="124"/>
    </location>
    <ligand>
        <name>UDP-N-acetyl-alpha-D-glucosamine</name>
        <dbReference type="ChEBI" id="CHEBI:57705"/>
    </ligand>
</feature>
<feature type="binding site" evidence="1">
    <location>
        <position position="164"/>
    </location>
    <ligand>
        <name>UDP-N-acetyl-alpha-D-glucosamine</name>
        <dbReference type="ChEBI" id="CHEBI:57705"/>
    </ligand>
</feature>
<feature type="binding site" evidence="1">
    <location>
        <position position="195"/>
    </location>
    <ligand>
        <name>UDP-N-acetyl-alpha-D-glucosamine</name>
        <dbReference type="ChEBI" id="CHEBI:57705"/>
    </ligand>
</feature>
<feature type="binding site" evidence="1">
    <location>
        <position position="291"/>
    </location>
    <ligand>
        <name>UDP-N-acetyl-alpha-D-glucosamine</name>
        <dbReference type="ChEBI" id="CHEBI:57705"/>
    </ligand>
</feature>
<comment type="function">
    <text evidence="1">Cell wall formation. Catalyzes the transfer of a GlcNAc subunit on undecaprenyl-pyrophosphoryl-MurNAc-pentapeptide (lipid intermediate I) to form undecaprenyl-pyrophosphoryl-MurNAc-(pentapeptide)GlcNAc (lipid intermediate II).</text>
</comment>
<comment type="catalytic activity">
    <reaction evidence="1">
        <text>di-trans,octa-cis-undecaprenyl diphospho-N-acetyl-alpha-D-muramoyl-L-alanyl-D-glutamyl-meso-2,6-diaminopimeloyl-D-alanyl-D-alanine + UDP-N-acetyl-alpha-D-glucosamine = di-trans,octa-cis-undecaprenyl diphospho-[N-acetyl-alpha-D-glucosaminyl-(1-&gt;4)]-N-acetyl-alpha-D-muramoyl-L-alanyl-D-glutamyl-meso-2,6-diaminopimeloyl-D-alanyl-D-alanine + UDP + H(+)</text>
        <dbReference type="Rhea" id="RHEA:31227"/>
        <dbReference type="ChEBI" id="CHEBI:15378"/>
        <dbReference type="ChEBI" id="CHEBI:57705"/>
        <dbReference type="ChEBI" id="CHEBI:58223"/>
        <dbReference type="ChEBI" id="CHEBI:61387"/>
        <dbReference type="ChEBI" id="CHEBI:61388"/>
        <dbReference type="EC" id="2.4.1.227"/>
    </reaction>
</comment>
<comment type="pathway">
    <text evidence="1">Cell wall biogenesis; peptidoglycan biosynthesis.</text>
</comment>
<comment type="subcellular location">
    <subcellularLocation>
        <location evidence="1">Cell inner membrane</location>
        <topology evidence="1">Peripheral membrane protein</topology>
        <orientation evidence="1">Cytoplasmic side</orientation>
    </subcellularLocation>
</comment>
<comment type="similarity">
    <text evidence="1">Belongs to the glycosyltransferase 28 family. MurG subfamily.</text>
</comment>
<reference key="1">
    <citation type="journal article" date="2006" name="Proc. Natl. Acad. Sci. U.S.A.">
        <title>Genome reduction in Leptospira borgpetersenii reflects limited transmission potential.</title>
        <authorList>
            <person name="Bulach D.M."/>
            <person name="Zuerner R.L."/>
            <person name="Wilson P."/>
            <person name="Seemann T."/>
            <person name="McGrath A."/>
            <person name="Cullen P.A."/>
            <person name="Davis J."/>
            <person name="Johnson M."/>
            <person name="Kuczek E."/>
            <person name="Alt D.P."/>
            <person name="Peterson-Burch B."/>
            <person name="Coppel R.L."/>
            <person name="Rood J.I."/>
            <person name="Davies J.K."/>
            <person name="Adler B."/>
        </authorList>
    </citation>
    <scope>NUCLEOTIDE SEQUENCE [LARGE SCALE GENOMIC DNA]</scope>
    <source>
        <strain>JB197</strain>
    </source>
</reference>
<organism>
    <name type="scientific">Leptospira borgpetersenii serovar Hardjo-bovis (strain JB197)</name>
    <dbReference type="NCBI Taxonomy" id="355277"/>
    <lineage>
        <taxon>Bacteria</taxon>
        <taxon>Pseudomonadati</taxon>
        <taxon>Spirochaetota</taxon>
        <taxon>Spirochaetia</taxon>
        <taxon>Leptospirales</taxon>
        <taxon>Leptospiraceae</taxon>
        <taxon>Leptospira</taxon>
    </lineage>
</organism>
<gene>
    <name evidence="1" type="primary">murG</name>
    <name type="ordered locus">LBJ_0476</name>
</gene>